<feature type="chain" id="PRO_1000192669" description="ATP-dependent protease subunit HslV">
    <location>
        <begin position="1"/>
        <end position="180"/>
    </location>
</feature>
<feature type="active site" evidence="1">
    <location>
        <position position="7"/>
    </location>
</feature>
<feature type="binding site" evidence="1">
    <location>
        <position position="165"/>
    </location>
    <ligand>
        <name>Na(+)</name>
        <dbReference type="ChEBI" id="CHEBI:29101"/>
    </ligand>
</feature>
<feature type="binding site" evidence="1">
    <location>
        <position position="168"/>
    </location>
    <ligand>
        <name>Na(+)</name>
        <dbReference type="ChEBI" id="CHEBI:29101"/>
    </ligand>
</feature>
<feature type="binding site" evidence="1">
    <location>
        <position position="171"/>
    </location>
    <ligand>
        <name>Na(+)</name>
        <dbReference type="ChEBI" id="CHEBI:29101"/>
    </ligand>
</feature>
<organism>
    <name type="scientific">Bacillus cereus (strain 03BB102)</name>
    <dbReference type="NCBI Taxonomy" id="572264"/>
    <lineage>
        <taxon>Bacteria</taxon>
        <taxon>Bacillati</taxon>
        <taxon>Bacillota</taxon>
        <taxon>Bacilli</taxon>
        <taxon>Bacillales</taxon>
        <taxon>Bacillaceae</taxon>
        <taxon>Bacillus</taxon>
        <taxon>Bacillus cereus group</taxon>
    </lineage>
</organism>
<gene>
    <name evidence="1" type="primary">hslV</name>
    <name type="ordered locus">BCA_3929</name>
</gene>
<sequence>MGNFHATTIFAVHHNGECAMAGDGQVTMGNAVVMKHTARKVRKLFQGKVLAGFAGSVADAFTLFEMFEGKLEEYNGNLQRAAVEMAKQWRGDKMLRQLEAMLIVMDKTTMLLVSGTGEVIEPDDGILAIGSGGNYALSAGRALKQYASEHLTAKQIAKASLEIAGDICVYTNHNIIVEEL</sequence>
<comment type="function">
    <text evidence="1">Protease subunit of a proteasome-like degradation complex believed to be a general protein degrading machinery.</text>
</comment>
<comment type="catalytic activity">
    <reaction evidence="1">
        <text>ATP-dependent cleavage of peptide bonds with broad specificity.</text>
        <dbReference type="EC" id="3.4.25.2"/>
    </reaction>
</comment>
<comment type="activity regulation">
    <text evidence="1">Allosterically activated by HslU binding.</text>
</comment>
<comment type="subunit">
    <text evidence="1">A double ring-shaped homohexamer of HslV is capped on each side by a ring-shaped HslU homohexamer. The assembly of the HslU/HslV complex is dependent on binding of ATP.</text>
</comment>
<comment type="subcellular location">
    <subcellularLocation>
        <location evidence="1">Cytoplasm</location>
    </subcellularLocation>
</comment>
<comment type="similarity">
    <text evidence="1">Belongs to the peptidase T1B family. HslV subfamily.</text>
</comment>
<reference key="1">
    <citation type="submission" date="2009-02" db="EMBL/GenBank/DDBJ databases">
        <title>Genome sequence of Bacillus cereus 03BB102.</title>
        <authorList>
            <person name="Dodson R.J."/>
            <person name="Jackson P."/>
            <person name="Munk A.C."/>
            <person name="Brettin T."/>
            <person name="Bruce D."/>
            <person name="Detter C."/>
            <person name="Tapia R."/>
            <person name="Han C."/>
            <person name="Sutton G."/>
            <person name="Sims D."/>
        </authorList>
    </citation>
    <scope>NUCLEOTIDE SEQUENCE [LARGE SCALE GENOMIC DNA]</scope>
    <source>
        <strain>03BB102</strain>
    </source>
</reference>
<proteinExistence type="inferred from homology"/>
<accession>C1EP54</accession>
<dbReference type="EC" id="3.4.25.2" evidence="1"/>
<dbReference type="EMBL" id="CP001407">
    <property type="protein sequence ID" value="ACO26743.1"/>
    <property type="molecule type" value="Genomic_DNA"/>
</dbReference>
<dbReference type="RefSeq" id="WP_000526272.1">
    <property type="nucleotide sequence ID" value="NZ_CP009318.1"/>
</dbReference>
<dbReference type="SMR" id="C1EP54"/>
<dbReference type="MEROPS" id="T01.007"/>
<dbReference type="GeneID" id="45023658"/>
<dbReference type="KEGG" id="bcx:BCA_3929"/>
<dbReference type="PATRIC" id="fig|572264.18.peg.3886"/>
<dbReference type="Proteomes" id="UP000002210">
    <property type="component" value="Chromosome"/>
</dbReference>
<dbReference type="GO" id="GO:0009376">
    <property type="term" value="C:HslUV protease complex"/>
    <property type="evidence" value="ECO:0007669"/>
    <property type="project" value="UniProtKB-UniRule"/>
</dbReference>
<dbReference type="GO" id="GO:0005839">
    <property type="term" value="C:proteasome core complex"/>
    <property type="evidence" value="ECO:0007669"/>
    <property type="project" value="InterPro"/>
</dbReference>
<dbReference type="GO" id="GO:0046872">
    <property type="term" value="F:metal ion binding"/>
    <property type="evidence" value="ECO:0007669"/>
    <property type="project" value="UniProtKB-KW"/>
</dbReference>
<dbReference type="GO" id="GO:0004298">
    <property type="term" value="F:threonine-type endopeptidase activity"/>
    <property type="evidence" value="ECO:0007669"/>
    <property type="project" value="UniProtKB-KW"/>
</dbReference>
<dbReference type="GO" id="GO:0051603">
    <property type="term" value="P:proteolysis involved in protein catabolic process"/>
    <property type="evidence" value="ECO:0007669"/>
    <property type="project" value="InterPro"/>
</dbReference>
<dbReference type="CDD" id="cd01913">
    <property type="entry name" value="protease_HslV"/>
    <property type="match status" value="1"/>
</dbReference>
<dbReference type="Gene3D" id="3.60.20.10">
    <property type="entry name" value="Glutamine Phosphoribosylpyrophosphate, subunit 1, domain 1"/>
    <property type="match status" value="1"/>
</dbReference>
<dbReference type="HAMAP" id="MF_00248">
    <property type="entry name" value="HslV"/>
    <property type="match status" value="1"/>
</dbReference>
<dbReference type="InterPro" id="IPR022281">
    <property type="entry name" value="ATP-dep_Prtase_HsIV_su"/>
</dbReference>
<dbReference type="InterPro" id="IPR029055">
    <property type="entry name" value="Ntn_hydrolases_N"/>
</dbReference>
<dbReference type="InterPro" id="IPR001353">
    <property type="entry name" value="Proteasome_sua/b"/>
</dbReference>
<dbReference type="InterPro" id="IPR023333">
    <property type="entry name" value="Proteasome_suB-type"/>
</dbReference>
<dbReference type="NCBIfam" id="TIGR03692">
    <property type="entry name" value="ATP_dep_HslV"/>
    <property type="match status" value="1"/>
</dbReference>
<dbReference type="NCBIfam" id="NF003964">
    <property type="entry name" value="PRK05456.1"/>
    <property type="match status" value="1"/>
</dbReference>
<dbReference type="PANTHER" id="PTHR32194:SF0">
    <property type="entry name" value="ATP-DEPENDENT PROTEASE SUBUNIT HSLV"/>
    <property type="match status" value="1"/>
</dbReference>
<dbReference type="PANTHER" id="PTHR32194">
    <property type="entry name" value="METALLOPROTEASE TLDD"/>
    <property type="match status" value="1"/>
</dbReference>
<dbReference type="Pfam" id="PF00227">
    <property type="entry name" value="Proteasome"/>
    <property type="match status" value="1"/>
</dbReference>
<dbReference type="PIRSF" id="PIRSF039093">
    <property type="entry name" value="HslV"/>
    <property type="match status" value="1"/>
</dbReference>
<dbReference type="SUPFAM" id="SSF56235">
    <property type="entry name" value="N-terminal nucleophile aminohydrolases (Ntn hydrolases)"/>
    <property type="match status" value="1"/>
</dbReference>
<dbReference type="PROSITE" id="PS51476">
    <property type="entry name" value="PROTEASOME_BETA_2"/>
    <property type="match status" value="1"/>
</dbReference>
<protein>
    <recommendedName>
        <fullName evidence="1">ATP-dependent protease subunit HslV</fullName>
        <ecNumber evidence="1">3.4.25.2</ecNumber>
    </recommendedName>
</protein>
<name>HSLV_BACC3</name>
<keyword id="KW-0021">Allosteric enzyme</keyword>
<keyword id="KW-0963">Cytoplasm</keyword>
<keyword id="KW-0378">Hydrolase</keyword>
<keyword id="KW-0479">Metal-binding</keyword>
<keyword id="KW-0645">Protease</keyword>
<keyword id="KW-0915">Sodium</keyword>
<keyword id="KW-0888">Threonine protease</keyword>
<evidence type="ECO:0000255" key="1">
    <source>
        <dbReference type="HAMAP-Rule" id="MF_00248"/>
    </source>
</evidence>